<reference key="1">
    <citation type="journal article" date="2006" name="Nat. Biotechnol.">
        <title>Genome sequence of the bioplastic-producing 'Knallgas' bacterium Ralstonia eutropha H16.</title>
        <authorList>
            <person name="Pohlmann A."/>
            <person name="Fricke W.F."/>
            <person name="Reinecke F."/>
            <person name="Kusian B."/>
            <person name="Liesegang H."/>
            <person name="Cramm R."/>
            <person name="Eitinger T."/>
            <person name="Ewering C."/>
            <person name="Poetter M."/>
            <person name="Schwartz E."/>
            <person name="Strittmatter A."/>
            <person name="Voss I."/>
            <person name="Gottschalk G."/>
            <person name="Steinbuechel A."/>
            <person name="Friedrich B."/>
            <person name="Bowien B."/>
        </authorList>
    </citation>
    <scope>NUCLEOTIDE SEQUENCE [LARGE SCALE GENOMIC DNA]</scope>
    <source>
        <strain>ATCC 17699 / DSM 428 / KCTC 22496 / NCIMB 10442 / H16 / Stanier 337</strain>
    </source>
</reference>
<reference key="2">
    <citation type="journal article" date="2010" name="J. Biol. Chem.">
        <title>Sulfoacetate is degraded via a novel pathway involving sulfoacetyl-CoA and sulfoacetaldehyde in Cupriavidus necator H16.</title>
        <authorList>
            <person name="Weinitschke S."/>
            <person name="Hollemeyer K."/>
            <person name="Kusian B."/>
            <person name="Bowien B."/>
            <person name="Smits T.H."/>
            <person name="Cook A.M."/>
        </authorList>
    </citation>
    <scope>FUNCTION</scope>
    <scope>INDUCTION</scope>
    <scope>DISRUPTION PHENOTYPE</scope>
    <scope>GENE NAME</scope>
    <source>
        <strain>ATCC 17699 / DSM 428 / KCTC 22496 / NCIMB 10442 / H16 / Stanier 337</strain>
    </source>
</reference>
<keyword id="KW-1003">Cell membrane</keyword>
<keyword id="KW-0472">Membrane</keyword>
<keyword id="KW-1185">Reference proteome</keyword>
<keyword id="KW-0812">Transmembrane</keyword>
<keyword id="KW-1133">Transmembrane helix</keyword>
<keyword id="KW-0813">Transport</keyword>
<protein>
    <recommendedName>
        <fullName>Probable sulfoacetate transporter SauU</fullName>
    </recommendedName>
</protein>
<name>SAUU_CUPNH</name>
<feature type="chain" id="PRO_0000418822" description="Probable sulfoacetate transporter SauU">
    <location>
        <begin position="1"/>
        <end position="430"/>
    </location>
</feature>
<feature type="transmembrane region" description="Helical" evidence="1">
    <location>
        <begin position="47"/>
        <end position="67"/>
    </location>
</feature>
<feature type="transmembrane region" description="Helical" evidence="1">
    <location>
        <begin position="83"/>
        <end position="103"/>
    </location>
</feature>
<feature type="transmembrane region" description="Helical" evidence="1">
    <location>
        <begin position="142"/>
        <end position="162"/>
    </location>
</feature>
<feature type="transmembrane region" description="Helical" evidence="1">
    <location>
        <begin position="165"/>
        <end position="185"/>
    </location>
</feature>
<feature type="transmembrane region" description="Helical" evidence="1">
    <location>
        <begin position="228"/>
        <end position="248"/>
    </location>
</feature>
<feature type="transmembrane region" description="Helical" evidence="1">
    <location>
        <begin position="263"/>
        <end position="283"/>
    </location>
</feature>
<feature type="transmembrane region" description="Helical" evidence="1">
    <location>
        <begin position="301"/>
        <end position="321"/>
    </location>
</feature>
<feature type="transmembrane region" description="Helical" evidence="1">
    <location>
        <begin position="327"/>
        <end position="347"/>
    </location>
</feature>
<feature type="transmembrane region" description="Helical" evidence="1">
    <location>
        <begin position="362"/>
        <end position="382"/>
    </location>
</feature>
<feature type="transmembrane region" description="Helical" evidence="1">
    <location>
        <begin position="390"/>
        <end position="410"/>
    </location>
</feature>
<organism>
    <name type="scientific">Cupriavidus necator (strain ATCC 17699 / DSM 428 / KCTC 22496 / NCIMB 10442 / H16 / Stanier 337)</name>
    <name type="common">Ralstonia eutropha</name>
    <dbReference type="NCBI Taxonomy" id="381666"/>
    <lineage>
        <taxon>Bacteria</taxon>
        <taxon>Pseudomonadati</taxon>
        <taxon>Pseudomonadota</taxon>
        <taxon>Betaproteobacteria</taxon>
        <taxon>Burkholderiales</taxon>
        <taxon>Burkholderiaceae</taxon>
        <taxon>Cupriavidus</taxon>
    </lineage>
</organism>
<dbReference type="EMBL" id="AM260479">
    <property type="protein sequence ID" value="CAJ93828.1"/>
    <property type="molecule type" value="Genomic_DNA"/>
</dbReference>
<dbReference type="RefSeq" id="WP_011615811.1">
    <property type="nucleotide sequence ID" value="NC_008313.1"/>
</dbReference>
<dbReference type="SMR" id="Q0K843"/>
<dbReference type="STRING" id="381666.H16_A2749"/>
<dbReference type="KEGG" id="reh:H16_A2749"/>
<dbReference type="PATRIC" id="fig|381666.6.peg.3145"/>
<dbReference type="eggNOG" id="COG2271">
    <property type="taxonomic scope" value="Bacteria"/>
</dbReference>
<dbReference type="HOGENOM" id="CLU_001265_5_1_4"/>
<dbReference type="OrthoDB" id="8596007at2"/>
<dbReference type="Proteomes" id="UP000008210">
    <property type="component" value="Chromosome 1"/>
</dbReference>
<dbReference type="GO" id="GO:0005886">
    <property type="term" value="C:plasma membrane"/>
    <property type="evidence" value="ECO:0007669"/>
    <property type="project" value="UniProtKB-SubCell"/>
</dbReference>
<dbReference type="GO" id="GO:0022857">
    <property type="term" value="F:transmembrane transporter activity"/>
    <property type="evidence" value="ECO:0007669"/>
    <property type="project" value="InterPro"/>
</dbReference>
<dbReference type="CDD" id="cd17319">
    <property type="entry name" value="MFS_ExuT_GudP_like"/>
    <property type="match status" value="1"/>
</dbReference>
<dbReference type="Gene3D" id="1.20.1250.20">
    <property type="entry name" value="MFS general substrate transporter like domains"/>
    <property type="match status" value="2"/>
</dbReference>
<dbReference type="InterPro" id="IPR011701">
    <property type="entry name" value="MFS"/>
</dbReference>
<dbReference type="InterPro" id="IPR020846">
    <property type="entry name" value="MFS_dom"/>
</dbReference>
<dbReference type="InterPro" id="IPR050382">
    <property type="entry name" value="MFS_Na/Anion_cotransporter"/>
</dbReference>
<dbReference type="InterPro" id="IPR036259">
    <property type="entry name" value="MFS_trans_sf"/>
</dbReference>
<dbReference type="InterPro" id="IPR000849">
    <property type="entry name" value="Sugar_P_transporter"/>
</dbReference>
<dbReference type="PANTHER" id="PTHR11662:SF399">
    <property type="entry name" value="FI19708P1-RELATED"/>
    <property type="match status" value="1"/>
</dbReference>
<dbReference type="PANTHER" id="PTHR11662">
    <property type="entry name" value="SOLUTE CARRIER FAMILY 17"/>
    <property type="match status" value="1"/>
</dbReference>
<dbReference type="Pfam" id="PF07690">
    <property type="entry name" value="MFS_1"/>
    <property type="match status" value="1"/>
</dbReference>
<dbReference type="PIRSF" id="PIRSF002808">
    <property type="entry name" value="Hexose_phosphate_transp"/>
    <property type="match status" value="1"/>
</dbReference>
<dbReference type="SUPFAM" id="SSF103473">
    <property type="entry name" value="MFS general substrate transporter"/>
    <property type="match status" value="1"/>
</dbReference>
<dbReference type="PROSITE" id="PS50850">
    <property type="entry name" value="MFS"/>
    <property type="match status" value="1"/>
</dbReference>
<comment type="function">
    <text evidence="2">May transport sulfoacetate into the cell.</text>
</comment>
<comment type="subcellular location">
    <subcellularLocation>
        <location evidence="3">Cell membrane</location>
        <topology evidence="3">Multi-pass membrane protein</topology>
    </subcellularLocation>
</comment>
<comment type="induction">
    <text evidence="2">Induced by sulfoacetate.</text>
</comment>
<comment type="disruption phenotype">
    <text evidence="2">Mutants do not grow with sulfoacetate, but can use acetate, taurine, isethionate and sulfoacetaldehyde. Mutants are also unable to induce expression of the sau cluster.</text>
</comment>
<comment type="similarity">
    <text evidence="3">Belongs to the major facilitator superfamily.</text>
</comment>
<sequence>MKQRIKTRHMILGVMCLMYFIAYIDRVNISVAAPLIREEMGLTTSQLGLVFSAFAYPYAAMQILGGWMADKFGPKKVLIVLSLIWGVATVLTGFAGSVLILVVLRFVLGIGEGGAFPTATRAFTYWMPVAERGFAQGITHSFARLGGAITPPVVLVIVAAAGWREAFIVLGAVSLGWTLLYAFFFKDSPDKHSRVTAQELQEIGYRHGDSRQAAKAATPWRRLFRRMWLVTFVDFCYGWSLWVYLTWLPSYLKEARGFDLKQLALFTALPLMAGVVGDTLGGVLSDRIYKRTGNLRLARGAVLFVGLAGSLMFIAPMTFTADAVNAVILLSLSFFFLELTNAVLWSLPLDIAGKYAGTAGGMMNTGFGVAGMVSPVVFGYLIERTGSYDLPFMISGALLGVGALASLFINPLLTVDSPDEKAGEVRHALP</sequence>
<proteinExistence type="evidence at transcript level"/>
<gene>
    <name type="primary">sauU</name>
    <name type="ordered locus">H16_A2749</name>
</gene>
<evidence type="ECO:0000255" key="1"/>
<evidence type="ECO:0000269" key="2">
    <source>
    </source>
</evidence>
<evidence type="ECO:0000305" key="3"/>
<accession>Q0K843</accession>